<reference key="1">
    <citation type="journal article" date="2004" name="Proc. Natl. Acad. Sci. U.S.A.">
        <title>Large-scale cDNA transfection screening for genes related to cancer development and progression.</title>
        <authorList>
            <person name="Wan D."/>
            <person name="Gong Y."/>
            <person name="Qin W."/>
            <person name="Zhang P."/>
            <person name="Li J."/>
            <person name="Wei L."/>
            <person name="Zhou X."/>
            <person name="Li H."/>
            <person name="Qiu X."/>
            <person name="Zhong F."/>
            <person name="He L."/>
            <person name="Yu J."/>
            <person name="Yao G."/>
            <person name="Jiang H."/>
            <person name="Qian L."/>
            <person name="Yu Y."/>
            <person name="Shu H."/>
            <person name="Chen X."/>
            <person name="Xu H."/>
            <person name="Guo M."/>
            <person name="Pan Z."/>
            <person name="Chen Y."/>
            <person name="Ge C."/>
            <person name="Yang S."/>
            <person name="Gu J."/>
        </authorList>
    </citation>
    <scope>NUCLEOTIDE SEQUENCE [LARGE SCALE MRNA] (ISOFORM 1)</scope>
</reference>
<reference key="2">
    <citation type="journal article" date="2004" name="Nat. Genet.">
        <title>Complete sequencing and characterization of 21,243 full-length human cDNAs.</title>
        <authorList>
            <person name="Ota T."/>
            <person name="Suzuki Y."/>
            <person name="Nishikawa T."/>
            <person name="Otsuki T."/>
            <person name="Sugiyama T."/>
            <person name="Irie R."/>
            <person name="Wakamatsu A."/>
            <person name="Hayashi K."/>
            <person name="Sato H."/>
            <person name="Nagai K."/>
            <person name="Kimura K."/>
            <person name="Makita H."/>
            <person name="Sekine M."/>
            <person name="Obayashi M."/>
            <person name="Nishi T."/>
            <person name="Shibahara T."/>
            <person name="Tanaka T."/>
            <person name="Ishii S."/>
            <person name="Yamamoto J."/>
            <person name="Saito K."/>
            <person name="Kawai Y."/>
            <person name="Isono Y."/>
            <person name="Nakamura Y."/>
            <person name="Nagahari K."/>
            <person name="Murakami K."/>
            <person name="Yasuda T."/>
            <person name="Iwayanagi T."/>
            <person name="Wagatsuma M."/>
            <person name="Shiratori A."/>
            <person name="Sudo H."/>
            <person name="Hosoiri T."/>
            <person name="Kaku Y."/>
            <person name="Kodaira H."/>
            <person name="Kondo H."/>
            <person name="Sugawara M."/>
            <person name="Takahashi M."/>
            <person name="Kanda K."/>
            <person name="Yokoi T."/>
            <person name="Furuya T."/>
            <person name="Kikkawa E."/>
            <person name="Omura Y."/>
            <person name="Abe K."/>
            <person name="Kamihara K."/>
            <person name="Katsuta N."/>
            <person name="Sato K."/>
            <person name="Tanikawa M."/>
            <person name="Yamazaki M."/>
            <person name="Ninomiya K."/>
            <person name="Ishibashi T."/>
            <person name="Yamashita H."/>
            <person name="Murakawa K."/>
            <person name="Fujimori K."/>
            <person name="Tanai H."/>
            <person name="Kimata M."/>
            <person name="Watanabe M."/>
            <person name="Hiraoka S."/>
            <person name="Chiba Y."/>
            <person name="Ishida S."/>
            <person name="Ono Y."/>
            <person name="Takiguchi S."/>
            <person name="Watanabe S."/>
            <person name="Yosida M."/>
            <person name="Hotuta T."/>
            <person name="Kusano J."/>
            <person name="Kanehori K."/>
            <person name="Takahashi-Fujii A."/>
            <person name="Hara H."/>
            <person name="Tanase T.-O."/>
            <person name="Nomura Y."/>
            <person name="Togiya S."/>
            <person name="Komai F."/>
            <person name="Hara R."/>
            <person name="Takeuchi K."/>
            <person name="Arita M."/>
            <person name="Imose N."/>
            <person name="Musashino K."/>
            <person name="Yuuki H."/>
            <person name="Oshima A."/>
            <person name="Sasaki N."/>
            <person name="Aotsuka S."/>
            <person name="Yoshikawa Y."/>
            <person name="Matsunawa H."/>
            <person name="Ichihara T."/>
            <person name="Shiohata N."/>
            <person name="Sano S."/>
            <person name="Moriya S."/>
            <person name="Momiyama H."/>
            <person name="Satoh N."/>
            <person name="Takami S."/>
            <person name="Terashima Y."/>
            <person name="Suzuki O."/>
            <person name="Nakagawa S."/>
            <person name="Senoh A."/>
            <person name="Mizoguchi H."/>
            <person name="Goto Y."/>
            <person name="Shimizu F."/>
            <person name="Wakebe H."/>
            <person name="Hishigaki H."/>
            <person name="Watanabe T."/>
            <person name="Sugiyama A."/>
            <person name="Takemoto M."/>
            <person name="Kawakami B."/>
            <person name="Yamazaki M."/>
            <person name="Watanabe K."/>
            <person name="Kumagai A."/>
            <person name="Itakura S."/>
            <person name="Fukuzumi Y."/>
            <person name="Fujimori Y."/>
            <person name="Komiyama M."/>
            <person name="Tashiro H."/>
            <person name="Tanigami A."/>
            <person name="Fujiwara T."/>
            <person name="Ono T."/>
            <person name="Yamada K."/>
            <person name="Fujii Y."/>
            <person name="Ozaki K."/>
            <person name="Hirao M."/>
            <person name="Ohmori Y."/>
            <person name="Kawabata A."/>
            <person name="Hikiji T."/>
            <person name="Kobatake N."/>
            <person name="Inagaki H."/>
            <person name="Ikema Y."/>
            <person name="Okamoto S."/>
            <person name="Okitani R."/>
            <person name="Kawakami T."/>
            <person name="Noguchi S."/>
            <person name="Itoh T."/>
            <person name="Shigeta K."/>
            <person name="Senba T."/>
            <person name="Matsumura K."/>
            <person name="Nakajima Y."/>
            <person name="Mizuno T."/>
            <person name="Morinaga M."/>
            <person name="Sasaki M."/>
            <person name="Togashi T."/>
            <person name="Oyama M."/>
            <person name="Hata H."/>
            <person name="Watanabe M."/>
            <person name="Komatsu T."/>
            <person name="Mizushima-Sugano J."/>
            <person name="Satoh T."/>
            <person name="Shirai Y."/>
            <person name="Takahashi Y."/>
            <person name="Nakagawa K."/>
            <person name="Okumura K."/>
            <person name="Nagase T."/>
            <person name="Nomura N."/>
            <person name="Kikuchi H."/>
            <person name="Masuho Y."/>
            <person name="Yamashita R."/>
            <person name="Nakai K."/>
            <person name="Yada T."/>
            <person name="Nakamura Y."/>
            <person name="Ohara O."/>
            <person name="Isogai T."/>
            <person name="Sugano S."/>
        </authorList>
    </citation>
    <scope>NUCLEOTIDE SEQUENCE [LARGE SCALE MRNA] (ISOFORMS 1 AND 2)</scope>
    <source>
        <tissue>Teratocarcinoma</tissue>
    </source>
</reference>
<reference key="3">
    <citation type="journal article" date="2003" name="Genome Res.">
        <title>Analysis of the gene-dense major histocompatibility complex class III region and its comparison to mouse.</title>
        <authorList>
            <person name="Xie T."/>
            <person name="Rowen L."/>
            <person name="Aguado B."/>
            <person name="Ahearn M.E."/>
            <person name="Madan A."/>
            <person name="Qin S."/>
            <person name="Campbell R.D."/>
            <person name="Hood L."/>
        </authorList>
    </citation>
    <scope>NUCLEOTIDE SEQUENCE [LARGE SCALE GENOMIC DNA]</scope>
</reference>
<reference key="4">
    <citation type="submission" date="1999-09" db="EMBL/GenBank/DDBJ databases">
        <title>Homo sapiens 2,229,817bp genomic DNA of 6p21.3 HLA class I region.</title>
        <authorList>
            <person name="Shiina S."/>
            <person name="Tamiya G."/>
            <person name="Oka A."/>
            <person name="Inoko H."/>
        </authorList>
    </citation>
    <scope>NUCLEOTIDE SEQUENCE [LARGE SCALE GENOMIC DNA]</scope>
</reference>
<reference key="5">
    <citation type="journal article" date="2003" name="Nature">
        <title>The DNA sequence and analysis of human chromosome 6.</title>
        <authorList>
            <person name="Mungall A.J."/>
            <person name="Palmer S.A."/>
            <person name="Sims S.K."/>
            <person name="Edwards C.A."/>
            <person name="Ashurst J.L."/>
            <person name="Wilming L."/>
            <person name="Jones M.C."/>
            <person name="Horton R."/>
            <person name="Hunt S.E."/>
            <person name="Scott C.E."/>
            <person name="Gilbert J.G.R."/>
            <person name="Clamp M.E."/>
            <person name="Bethel G."/>
            <person name="Milne S."/>
            <person name="Ainscough R."/>
            <person name="Almeida J.P."/>
            <person name="Ambrose K.D."/>
            <person name="Andrews T.D."/>
            <person name="Ashwell R.I.S."/>
            <person name="Babbage A.K."/>
            <person name="Bagguley C.L."/>
            <person name="Bailey J."/>
            <person name="Banerjee R."/>
            <person name="Barker D.J."/>
            <person name="Barlow K.F."/>
            <person name="Bates K."/>
            <person name="Beare D.M."/>
            <person name="Beasley H."/>
            <person name="Beasley O."/>
            <person name="Bird C.P."/>
            <person name="Blakey S.E."/>
            <person name="Bray-Allen S."/>
            <person name="Brook J."/>
            <person name="Brown A.J."/>
            <person name="Brown J.Y."/>
            <person name="Burford D.C."/>
            <person name="Burrill W."/>
            <person name="Burton J."/>
            <person name="Carder C."/>
            <person name="Carter N.P."/>
            <person name="Chapman J.C."/>
            <person name="Clark S.Y."/>
            <person name="Clark G."/>
            <person name="Clee C.M."/>
            <person name="Clegg S."/>
            <person name="Cobley V."/>
            <person name="Collier R.E."/>
            <person name="Collins J.E."/>
            <person name="Colman L.K."/>
            <person name="Corby N.R."/>
            <person name="Coville G.J."/>
            <person name="Culley K.M."/>
            <person name="Dhami P."/>
            <person name="Davies J."/>
            <person name="Dunn M."/>
            <person name="Earthrowl M.E."/>
            <person name="Ellington A.E."/>
            <person name="Evans K.A."/>
            <person name="Faulkner L."/>
            <person name="Francis M.D."/>
            <person name="Frankish A."/>
            <person name="Frankland J."/>
            <person name="French L."/>
            <person name="Garner P."/>
            <person name="Garnett J."/>
            <person name="Ghori M.J."/>
            <person name="Gilby L.M."/>
            <person name="Gillson C.J."/>
            <person name="Glithero R.J."/>
            <person name="Grafham D.V."/>
            <person name="Grant M."/>
            <person name="Gribble S."/>
            <person name="Griffiths C."/>
            <person name="Griffiths M.N.D."/>
            <person name="Hall R."/>
            <person name="Halls K.S."/>
            <person name="Hammond S."/>
            <person name="Harley J.L."/>
            <person name="Hart E.A."/>
            <person name="Heath P.D."/>
            <person name="Heathcott R."/>
            <person name="Holmes S.J."/>
            <person name="Howden P.J."/>
            <person name="Howe K.L."/>
            <person name="Howell G.R."/>
            <person name="Huckle E."/>
            <person name="Humphray S.J."/>
            <person name="Humphries M.D."/>
            <person name="Hunt A.R."/>
            <person name="Johnson C.M."/>
            <person name="Joy A.A."/>
            <person name="Kay M."/>
            <person name="Keenan S.J."/>
            <person name="Kimberley A.M."/>
            <person name="King A."/>
            <person name="Laird G.K."/>
            <person name="Langford C."/>
            <person name="Lawlor S."/>
            <person name="Leongamornlert D.A."/>
            <person name="Leversha M."/>
            <person name="Lloyd C.R."/>
            <person name="Lloyd D.M."/>
            <person name="Loveland J.E."/>
            <person name="Lovell J."/>
            <person name="Martin S."/>
            <person name="Mashreghi-Mohammadi M."/>
            <person name="Maslen G.L."/>
            <person name="Matthews L."/>
            <person name="McCann O.T."/>
            <person name="McLaren S.J."/>
            <person name="McLay K."/>
            <person name="McMurray A."/>
            <person name="Moore M.J.F."/>
            <person name="Mullikin J.C."/>
            <person name="Niblett D."/>
            <person name="Nickerson T."/>
            <person name="Novik K.L."/>
            <person name="Oliver K."/>
            <person name="Overton-Larty E.K."/>
            <person name="Parker A."/>
            <person name="Patel R."/>
            <person name="Pearce A.V."/>
            <person name="Peck A.I."/>
            <person name="Phillimore B.J.C.T."/>
            <person name="Phillips S."/>
            <person name="Plumb R.W."/>
            <person name="Porter K.M."/>
            <person name="Ramsey Y."/>
            <person name="Ranby S.A."/>
            <person name="Rice C.M."/>
            <person name="Ross M.T."/>
            <person name="Searle S.M."/>
            <person name="Sehra H.K."/>
            <person name="Sheridan E."/>
            <person name="Skuce C.D."/>
            <person name="Smith S."/>
            <person name="Smith M."/>
            <person name="Spraggon L."/>
            <person name="Squares S.L."/>
            <person name="Steward C.A."/>
            <person name="Sycamore N."/>
            <person name="Tamlyn-Hall G."/>
            <person name="Tester J."/>
            <person name="Theaker A.J."/>
            <person name="Thomas D.W."/>
            <person name="Thorpe A."/>
            <person name="Tracey A."/>
            <person name="Tromans A."/>
            <person name="Tubby B."/>
            <person name="Wall M."/>
            <person name="Wallis J.M."/>
            <person name="West A.P."/>
            <person name="White S.S."/>
            <person name="Whitehead S.L."/>
            <person name="Whittaker H."/>
            <person name="Wild A."/>
            <person name="Willey D.J."/>
            <person name="Wilmer T.E."/>
            <person name="Wood J.M."/>
            <person name="Wray P.W."/>
            <person name="Wyatt J.C."/>
            <person name="Young L."/>
            <person name="Younger R.M."/>
            <person name="Bentley D.R."/>
            <person name="Coulson A."/>
            <person name="Durbin R.M."/>
            <person name="Hubbard T."/>
            <person name="Sulston J.E."/>
            <person name="Dunham I."/>
            <person name="Rogers J."/>
            <person name="Beck S."/>
        </authorList>
    </citation>
    <scope>NUCLEOTIDE SEQUENCE [LARGE SCALE GENOMIC DNA]</scope>
</reference>
<reference key="6">
    <citation type="journal article" date="2004" name="Genome Res.">
        <title>The status, quality, and expansion of the NIH full-length cDNA project: the Mammalian Gene Collection (MGC).</title>
        <authorList>
            <consortium name="The MGC Project Team"/>
        </authorList>
    </citation>
    <scope>NUCLEOTIDE SEQUENCE [LARGE SCALE MRNA] (ISOFORM 1)</scope>
    <source>
        <tissue>Brain</tissue>
    </source>
</reference>
<reference key="7">
    <citation type="journal article" date="2003" name="Nat. Biotechnol.">
        <title>Exploring proteomes and analyzing protein processing by mass spectrometric identification of sorted N-terminal peptides.</title>
        <authorList>
            <person name="Gevaert K."/>
            <person name="Goethals M."/>
            <person name="Martens L."/>
            <person name="Van Damme J."/>
            <person name="Staes A."/>
            <person name="Thomas G.R."/>
            <person name="Vandekerckhove J."/>
        </authorList>
    </citation>
    <scope>PROTEIN SEQUENCE OF 2-12 (ISOFORM 1)</scope>
    <source>
        <tissue>Platelet</tissue>
    </source>
</reference>
<reference key="8">
    <citation type="journal article" date="2014" name="J. Proteomics">
        <title>An enzyme assisted RP-RPLC approach for in-depth analysis of human liver phosphoproteome.</title>
        <authorList>
            <person name="Bian Y."/>
            <person name="Song C."/>
            <person name="Cheng K."/>
            <person name="Dong M."/>
            <person name="Wang F."/>
            <person name="Huang J."/>
            <person name="Sun D."/>
            <person name="Wang L."/>
            <person name="Ye M."/>
            <person name="Zou H."/>
        </authorList>
    </citation>
    <scope>IDENTIFICATION BY MASS SPECTROMETRY [LARGE SCALE ANALYSIS]</scope>
    <source>
        <tissue>Liver</tissue>
    </source>
</reference>
<reference key="9">
    <citation type="journal article" date="2014" name="PLoS ONE">
        <title>Biochemical and pharmacological characterization of the human lymphocyte antigen B-associated transcript 5 (BAT5/ABHD16A).</title>
        <authorList>
            <person name="Savinainen J.R."/>
            <person name="Patel J.Z."/>
            <person name="Parkkari T."/>
            <person name="Navia-Paldanius D."/>
            <person name="Marjamaa J.J."/>
            <person name="Laitinen T."/>
            <person name="Nevalainen T."/>
            <person name="Laitinen J.T."/>
        </authorList>
    </citation>
    <scope>FUNCTION</scope>
    <scope>CATALYTIC ACTIVITY</scope>
    <scope>ACTIVITY REGULATION</scope>
    <scope>BIOPHYSICOCHEMICAL PROPERTIES</scope>
</reference>
<reference key="10">
    <citation type="journal article" date="2021" name="Am. J. Hum. Genet.">
        <title>ABHD16A deficiency causes a complicated form of hereditary spastic paraplegia associated with intellectual disability and cerebral anomalies.</title>
        <authorList>
            <consortium name="Care4Rare Canada Consortium"/>
            <person name="Lemire G."/>
            <person name="Ito Y.A."/>
            <person name="Marshall A.E."/>
            <person name="Chrestian N."/>
            <person name="Stanley V."/>
            <person name="Brady L."/>
            <person name="Tarnopolsky M."/>
            <person name="Curry C.J."/>
            <person name="Hartley T."/>
            <person name="Mears W."/>
            <person name="Derksen A."/>
            <person name="Rioux N."/>
            <person name="Laflamme N."/>
            <person name="Hutchison H.T."/>
            <person name="Pais L.S."/>
            <person name="Zaki M.S."/>
            <person name="Sultan T."/>
            <person name="Dane A.D."/>
            <person name="Gleeson J.G."/>
            <person name="Vaz F.M."/>
            <person name="Kernohan K.D."/>
            <person name="Bernard G."/>
            <person name="Boycott K.M."/>
        </authorList>
    </citation>
    <scope>VARIANTS SPG86 HIS-118; ILE-121; GLN-252; ARG-409 AND 445-ARG--LEU-558 DEL</scope>
    <scope>INVOLVEMENT IN SPG86</scope>
</reference>
<reference key="11">
    <citation type="journal article" date="2021" name="Front. Neurol.">
        <title>Pathogenic variants in ABHD16A cause a novel psychomotor developmental disorder with spastic paraplegia.</title>
        <authorList>
            <person name="Yahia A."/>
            <person name="Elsayed L.E.O."/>
            <person name="Valter R."/>
            <person name="Hamed A.A.A."/>
            <person name="Mohammed I.N."/>
            <person name="Elseed M.A."/>
            <person name="Salih M.A."/>
            <person name="Esteves T."/>
            <person name="Auger N."/>
            <person name="Abubaker R."/>
            <person name="Koko M."/>
            <person name="Abozar F."/>
            <person name="Malik H."/>
            <person name="Adil R."/>
            <person name="Emad S."/>
            <person name="Musallam M.A."/>
            <person name="Idris R."/>
            <person name="Eltazi I.Z.M."/>
            <person name="Babai A."/>
            <person name="Ahmed E.A.A."/>
            <person name="Abd Allah A.S.I."/>
            <person name="Mairey M."/>
            <person name="Ahmed A.K.M.A."/>
            <person name="Elbashir M.I."/>
            <person name="Brice A."/>
            <person name="Ibrahim M.E."/>
            <person name="Ahmed A.E."/>
            <person name="Lamari F."/>
            <person name="Stevanin G."/>
        </authorList>
    </citation>
    <scope>VARIANTS SPG86 114-ARG--LEU-558 DEL AND GLN-457</scope>
    <scope>CHARACTERIZATION OF VARIANTS SPG86 114-ARG--LEU-558 DEL AND GLN-457</scope>
    <scope>INVOLVEMENT IN SPG86</scope>
</reference>
<reference key="12">
    <citation type="journal article" date="2022" name="Clin. Genet.">
        <title>A homozygous ABHD16A variant causes a complex hereditary spastic paraplegia with developmental delay, absent speech, and characteristic face.</title>
        <authorList>
            <person name="Miyake N."/>
            <person name="Silva S."/>
            <person name="Troncoso M."/>
            <person name="Okamoto N."/>
            <person name="Andachi Y."/>
            <person name="Kato M."/>
            <person name="Iwabuchi C."/>
            <person name="Hirose M."/>
            <person name="Fujita A."/>
            <person name="Uchiyama Y."/>
            <person name="Matsumoto N."/>
        </authorList>
    </citation>
    <scope>VARIANT SPG86 279-GLN--LEU-558 DEL</scope>
    <scope>INVOLVEMENT IN SPG86</scope>
</reference>
<gene>
    <name evidence="11" type="primary">ABHD16A</name>
    <name evidence="9" type="synonym">BAT5</name>
    <name type="synonym">G5</name>
    <name type="synonym">NG26</name>
    <name type="ORF">PP199</name>
</gene>
<accession>O95870</accession>
<accession>A2BEY3</accession>
<accession>B7Z4R6</accession>
<accession>Q5SRR1</accession>
<accession>Q5SRR2</accession>
<accession>Q8WYH0</accession>
<accession>Q9NW33</accession>
<protein>
    <recommendedName>
        <fullName evidence="10">Phosphatidylserine lipase ABHD16A</fullName>
        <ecNumber evidence="2">3.1.-.-</ecNumber>
    </recommendedName>
    <alternativeName>
        <fullName evidence="10">Alpha/beta hydrolase domain-containing protein 16A</fullName>
        <shortName evidence="10">Abhydrolase domain-containing protein 16A</shortName>
    </alternativeName>
    <alternativeName>
        <fullName evidence="9">HLA-B-associated transcript 5</fullName>
        <shortName evidence="9">hBAT5</shortName>
    </alternativeName>
    <alternativeName>
        <fullName evidence="10">Monoacylglycerol lipase ABHD16A</fullName>
        <ecNumber evidence="4">3.1.1.23</ecNumber>
    </alternativeName>
    <alternativeName>
        <fullName>Protein G5</fullName>
    </alternativeName>
</protein>
<comment type="function">
    <text evidence="2 4">Phosphatidylserine (PS) lipase that mediates the hydrolysis of phosphatidylserine to generate lysophosphatidylserine (LPS) (By similarity). LPS constitutes a class of signaling lipids that regulates immunological and neurological processes (By similarity). Has no activity towards diacylglycerol, triacylglycerol or lysophosphatidylserine lipase (PubMed:25290914). Also has monoacylglycerol lipase activity, with preference for 1-(9Z,12Z-octadecadienoyl)-glycerol (1-LG) and 2-glyceryl-15-deoxy-Delta(12,14)-prostaglandin J2 (15d-PGJ(2)-G) (PubMed:25290914).</text>
</comment>
<comment type="catalytic activity">
    <reaction evidence="2">
        <text>1-heptadecanoyl-2-(5Z,8Z,11Z,14Z-eicosatetraenoyl)-sn-glycero-3-phosphoserine + H2O = 1-heptadecanoyl-sn-glycero-3-phosphoserine + (5Z,8Z,11Z,14Z)-eicosatetraenoate + H(+)</text>
        <dbReference type="Rhea" id="RHEA:44500"/>
        <dbReference type="ChEBI" id="CHEBI:15377"/>
        <dbReference type="ChEBI" id="CHEBI:15378"/>
        <dbReference type="ChEBI" id="CHEBI:32395"/>
        <dbReference type="ChEBI" id="CHEBI:84461"/>
        <dbReference type="ChEBI" id="CHEBI:84462"/>
    </reaction>
</comment>
<comment type="catalytic activity">
    <reaction evidence="2">
        <text>1-hexadecanoyl-2-(9Z-octadecenoyl)-sn-glycero-3-phospho-L-serine + H2O = 1-hexadecanoyl-sn-glycero-3-phospho-L-serine + (9Z)-octadecenoate + H(+)</text>
        <dbReference type="Rhea" id="RHEA:41752"/>
        <dbReference type="ChEBI" id="CHEBI:15377"/>
        <dbReference type="ChEBI" id="CHEBI:15378"/>
        <dbReference type="ChEBI" id="CHEBI:30823"/>
        <dbReference type="ChEBI" id="CHEBI:75020"/>
        <dbReference type="ChEBI" id="CHEBI:75029"/>
    </reaction>
</comment>
<comment type="catalytic activity">
    <reaction evidence="2">
        <text>1-octadecanoyl-2-(9Z,12Z-octadecadienoyl)-sn-glycero-3-phosphoserine + H2O = 1-octadecanoyl-sn-glycero-3-phosphoserine + (9Z,12Z)-octadecadienoate + H(+)</text>
        <dbReference type="Rhea" id="RHEA:44516"/>
        <dbReference type="ChEBI" id="CHEBI:15377"/>
        <dbReference type="ChEBI" id="CHEBI:15378"/>
        <dbReference type="ChEBI" id="CHEBI:30245"/>
        <dbReference type="ChEBI" id="CHEBI:84466"/>
        <dbReference type="ChEBI" id="CHEBI:84467"/>
    </reaction>
</comment>
<comment type="catalytic activity">
    <reaction evidence="2">
        <text>1-heptadecanoyl-2-(5Z,8Z,11Z,14Z-eicosatetraenoyl)-sn-glycero-3-phosphocholine + H2O = 1-heptadecanoyl-sn-glycero-3-phosphocholine + (5Z,8Z,11Z,14Z)-eicosatetraenoate + H(+)</text>
        <dbReference type="Rhea" id="RHEA:44520"/>
        <dbReference type="ChEBI" id="CHEBI:15377"/>
        <dbReference type="ChEBI" id="CHEBI:15378"/>
        <dbReference type="ChEBI" id="CHEBI:32395"/>
        <dbReference type="ChEBI" id="CHEBI:74340"/>
        <dbReference type="ChEBI" id="CHEBI:84470"/>
    </reaction>
</comment>
<comment type="catalytic activity">
    <reaction evidence="2">
        <text>1-hexadecanoyl-2-(9Z-octadecenoyl)-sn-glycero-3-phosphoglycerol + H2O = 1-hexadecanoyl-sn-glycero-3-phosphoglycerol + (9Z)-octadecenoate + H(+)</text>
        <dbReference type="Rhea" id="RHEA:44524"/>
        <dbReference type="ChEBI" id="CHEBI:15377"/>
        <dbReference type="ChEBI" id="CHEBI:15378"/>
        <dbReference type="ChEBI" id="CHEBI:30823"/>
        <dbReference type="ChEBI" id="CHEBI:84472"/>
        <dbReference type="ChEBI" id="CHEBI:84475"/>
    </reaction>
</comment>
<comment type="catalytic activity">
    <reaction evidence="2">
        <text>1-hexadecanoyl-2-(9Z-octadecenoyl)-sn-glycero-3-phospho-(1D-myo-inositol) + H2O = 1-hexadecanoyl-sn-glycero-3-phospho-(1D-myo-inositol) + (9Z)-octadecenoate + H(+)</text>
        <dbReference type="Rhea" id="RHEA:44528"/>
        <dbReference type="ChEBI" id="CHEBI:15377"/>
        <dbReference type="ChEBI" id="CHEBI:15378"/>
        <dbReference type="ChEBI" id="CHEBI:30823"/>
        <dbReference type="ChEBI" id="CHEBI:72833"/>
        <dbReference type="ChEBI" id="CHEBI:72837"/>
    </reaction>
</comment>
<comment type="catalytic activity">
    <reaction evidence="2">
        <text>1-heptadecanoyl-2-(5Z,8Z,11Z,14Z-eicosatetraenoyl)-sn-glycero-3-phosphoethanolamine + H2O = 1-heptadecanoyl-sn-glycero-3-phosphoethanolamine + (5Z,8Z,11Z,14Z)-eicosatetraenoate + H(+)</text>
        <dbReference type="Rhea" id="RHEA:44540"/>
        <dbReference type="ChEBI" id="CHEBI:15377"/>
        <dbReference type="ChEBI" id="CHEBI:15378"/>
        <dbReference type="ChEBI" id="CHEBI:32395"/>
        <dbReference type="ChEBI" id="CHEBI:84489"/>
        <dbReference type="ChEBI" id="CHEBI:84490"/>
    </reaction>
</comment>
<comment type="catalytic activity">
    <reaction evidence="2">
        <text>1-hexadecanoyl-2-(9Z-octadecenoyl)-sn-glycero-3-phospho-(1'-sn-glycerol) + H2O = 1-hexadecanoyl-sn-glycero-3-phospho-(1'-sn-glycerol) + (9Z)-octadecenoate + H(+)</text>
        <dbReference type="Rhea" id="RHEA:40919"/>
        <dbReference type="ChEBI" id="CHEBI:15377"/>
        <dbReference type="ChEBI" id="CHEBI:15378"/>
        <dbReference type="ChEBI" id="CHEBI:30823"/>
        <dbReference type="ChEBI" id="CHEBI:72841"/>
        <dbReference type="ChEBI" id="CHEBI:75158"/>
    </reaction>
</comment>
<comment type="catalytic activity">
    <reaction evidence="4">
        <text>Hydrolyzes glycerol monoesters of long-chain fatty acids.</text>
        <dbReference type="EC" id="3.1.1.23"/>
    </reaction>
</comment>
<comment type="catalytic activity">
    <reaction evidence="4">
        <text>1-tetradecanoylglycerol + H2O = tetradecanoate + glycerol + H(+)</text>
        <dbReference type="Rhea" id="RHEA:44312"/>
        <dbReference type="ChEBI" id="CHEBI:15377"/>
        <dbReference type="ChEBI" id="CHEBI:15378"/>
        <dbReference type="ChEBI" id="CHEBI:17754"/>
        <dbReference type="ChEBI" id="CHEBI:30807"/>
        <dbReference type="ChEBI" id="CHEBI:75562"/>
    </reaction>
    <physiologicalReaction direction="left-to-right" evidence="4">
        <dbReference type="Rhea" id="RHEA:44313"/>
    </physiologicalReaction>
</comment>
<comment type="catalytic activity">
    <reaction evidence="4">
        <text>2-hexadecanoylglycerol + H2O = glycerol + hexadecanoate + H(+)</text>
        <dbReference type="Rhea" id="RHEA:39963"/>
        <dbReference type="ChEBI" id="CHEBI:7896"/>
        <dbReference type="ChEBI" id="CHEBI:15377"/>
        <dbReference type="ChEBI" id="CHEBI:15378"/>
        <dbReference type="ChEBI" id="CHEBI:17754"/>
        <dbReference type="ChEBI" id="CHEBI:75455"/>
    </reaction>
    <physiologicalReaction direction="left-to-right" evidence="4">
        <dbReference type="Rhea" id="RHEA:39964"/>
    </physiologicalReaction>
</comment>
<comment type="catalytic activity">
    <reaction evidence="4">
        <text>1-(9Z-octadecenoyl)-glycerol + H2O = glycerol + (9Z)-octadecenoate + H(+)</text>
        <dbReference type="Rhea" id="RHEA:38487"/>
        <dbReference type="ChEBI" id="CHEBI:15377"/>
        <dbReference type="ChEBI" id="CHEBI:15378"/>
        <dbReference type="ChEBI" id="CHEBI:17754"/>
        <dbReference type="ChEBI" id="CHEBI:30823"/>
        <dbReference type="ChEBI" id="CHEBI:75342"/>
    </reaction>
    <physiologicalReaction direction="left-to-right" evidence="4">
        <dbReference type="Rhea" id="RHEA:38488"/>
    </physiologicalReaction>
</comment>
<comment type="catalytic activity">
    <reaction evidence="4">
        <text>2-(9Z-octadecenoyl)-glycerol + H2O = glycerol + (9Z)-octadecenoate + H(+)</text>
        <dbReference type="Rhea" id="RHEA:38491"/>
        <dbReference type="ChEBI" id="CHEBI:15377"/>
        <dbReference type="ChEBI" id="CHEBI:15378"/>
        <dbReference type="ChEBI" id="CHEBI:17754"/>
        <dbReference type="ChEBI" id="CHEBI:30823"/>
        <dbReference type="ChEBI" id="CHEBI:73990"/>
    </reaction>
    <physiologicalReaction direction="left-to-right" evidence="4">
        <dbReference type="Rhea" id="RHEA:38492"/>
    </physiologicalReaction>
</comment>
<comment type="catalytic activity">
    <reaction evidence="4">
        <text>2-(9Z,12Z-octadecadienoyl)-glycerol + H2O = (9Z,12Z)-octadecadienoate + glycerol + H(+)</text>
        <dbReference type="Rhea" id="RHEA:44732"/>
        <dbReference type="ChEBI" id="CHEBI:15377"/>
        <dbReference type="ChEBI" id="CHEBI:15378"/>
        <dbReference type="ChEBI" id="CHEBI:17754"/>
        <dbReference type="ChEBI" id="CHEBI:30245"/>
        <dbReference type="ChEBI" id="CHEBI:75457"/>
    </reaction>
    <physiologicalReaction direction="left-to-right" evidence="4">
        <dbReference type="Rhea" id="RHEA:44733"/>
    </physiologicalReaction>
</comment>
<comment type="catalytic activity">
    <reaction evidence="4">
        <text>1-(5Z,8Z,11Z,14Z-eicosatetraenoyl)-glycerol + H2O = glycerol + (5Z,8Z,11Z,14Z)-eicosatetraenoate + H(+)</text>
        <dbReference type="Rhea" id="RHEA:44728"/>
        <dbReference type="ChEBI" id="CHEBI:15377"/>
        <dbReference type="ChEBI" id="CHEBI:15378"/>
        <dbReference type="ChEBI" id="CHEBI:17754"/>
        <dbReference type="ChEBI" id="CHEBI:32395"/>
        <dbReference type="ChEBI" id="CHEBI:75612"/>
    </reaction>
    <physiologicalReaction direction="left-to-right" evidence="4">
        <dbReference type="Rhea" id="RHEA:44729"/>
    </physiologicalReaction>
</comment>
<comment type="catalytic activity">
    <reaction evidence="4">
        <text>2-(5Z,8Z,11Z,14Z-eicosatetraenoyl)-glycerol + H2O = glycerol + (5Z,8Z,11Z,14Z)-eicosatetraenoate + H(+)</text>
        <dbReference type="Rhea" id="RHEA:26132"/>
        <dbReference type="ChEBI" id="CHEBI:15377"/>
        <dbReference type="ChEBI" id="CHEBI:15378"/>
        <dbReference type="ChEBI" id="CHEBI:17754"/>
        <dbReference type="ChEBI" id="CHEBI:32395"/>
        <dbReference type="ChEBI" id="CHEBI:52392"/>
    </reaction>
    <physiologicalReaction direction="left-to-right" evidence="4">
        <dbReference type="Rhea" id="RHEA:26133"/>
    </physiologicalReaction>
</comment>
<comment type="catalytic activity">
    <reaction evidence="4">
        <text>prostaglandin D2-1-glycerol ester + H2O = prostaglandin D2 + glycerol + H(+)</text>
        <dbReference type="Rhea" id="RHEA:45412"/>
        <dbReference type="ChEBI" id="CHEBI:15377"/>
        <dbReference type="ChEBI" id="CHEBI:15378"/>
        <dbReference type="ChEBI" id="CHEBI:17754"/>
        <dbReference type="ChEBI" id="CHEBI:57406"/>
        <dbReference type="ChEBI" id="CHEBI:85232"/>
    </reaction>
    <physiologicalReaction direction="left-to-right" evidence="4">
        <dbReference type="Rhea" id="RHEA:45413"/>
    </physiologicalReaction>
</comment>
<comment type="catalytic activity">
    <reaction evidence="4">
        <text>2-glyceryl-15-deoxy-Delta(12,14)-prostaglandin J2 + H2O = 15-deoxy-Delta(12,14)-prostaglandin J2 + glycerol + H(+)</text>
        <dbReference type="Rhea" id="RHEA:45416"/>
        <dbReference type="ChEBI" id="CHEBI:15377"/>
        <dbReference type="ChEBI" id="CHEBI:15378"/>
        <dbReference type="ChEBI" id="CHEBI:17754"/>
        <dbReference type="ChEBI" id="CHEBI:85236"/>
        <dbReference type="ChEBI" id="CHEBI:85238"/>
    </reaction>
    <physiologicalReaction direction="left-to-right" evidence="4">
        <dbReference type="Rhea" id="RHEA:45417"/>
    </physiologicalReaction>
</comment>
<comment type="catalytic activity">
    <reaction evidence="4">
        <text>1-(9Z,12Z-octadecadienoyl)-glycerol + H2O = (9Z,12Z)-octadecadienoate + glycerol + H(+)</text>
        <dbReference type="Rhea" id="RHEA:48428"/>
        <dbReference type="ChEBI" id="CHEBI:15377"/>
        <dbReference type="ChEBI" id="CHEBI:15378"/>
        <dbReference type="ChEBI" id="CHEBI:17754"/>
        <dbReference type="ChEBI" id="CHEBI:30245"/>
        <dbReference type="ChEBI" id="CHEBI:75568"/>
    </reaction>
    <physiologicalReaction direction="left-to-right" evidence="4">
        <dbReference type="Rhea" id="RHEA:48429"/>
    </physiologicalReaction>
</comment>
<comment type="activity regulation">
    <text evidence="4">Inhibited by beta-lactone-based lipid inhibitors, such as beta-lactone palmostatin-B.</text>
</comment>
<comment type="biophysicochemical properties">
    <kinetics>
        <KM evidence="4">6.9 uM for 1-(9Z,12Z-octadecadienoyl)-glycerol (1-LG) (in absence of BSA)</KM>
        <KM evidence="4">137.8 uM for 1-(9Z,12Z-octadecadienoyl)-glycerol (1-LG) (in presence of BSA)</KM>
        <KM evidence="4">20.9 uM for 2-glyceryl-15-deoxy-Delta(12,14)-prostaglandin J2 (15d-PGJ(2)-G) (in presence of BSA)</KM>
        <Vmax evidence="4">7.3 nmol/min/mg enzyme with 1-(9Z,12Z-octadecadienoyl)-glycerol (1-LG) as substrate (in absence of BSA)</Vmax>
        <Vmax evidence="4">13.2 nmol/min/mg enzyme with 1-(9Z,12Z-octadecadienoyl)-glycerol (1-LG) as substrate (in presence of BSA)</Vmax>
    </kinetics>
    <phDependence>
        <text evidence="4">Optimum pH is 7.2-8.0.</text>
    </phDependence>
</comment>
<comment type="interaction">
    <interactant intactId="EBI-348517">
        <id>O95870</id>
    </interactant>
    <interactant intactId="EBI-2803601">
        <id>Q9NRZ7</id>
        <label>AGPAT3</label>
    </interactant>
    <organismsDiffer>false</organismsDiffer>
    <experiments>3</experiments>
</comment>
<comment type="interaction">
    <interactant intactId="EBI-348517">
        <id>O95870</id>
    </interactant>
    <interactant intactId="EBI-13059134">
        <id>Q13520</id>
        <label>AQP6</label>
    </interactant>
    <organismsDiffer>false</organismsDiffer>
    <experiments>3</experiments>
</comment>
<comment type="interaction">
    <interactant intactId="EBI-348517">
        <id>O95870</id>
    </interactant>
    <interactant intactId="EBI-10489564">
        <id>Q6P5T0</id>
        <label>AQP7</label>
    </interactant>
    <organismsDiffer>false</organismsDiffer>
    <experiments>3</experiments>
</comment>
<comment type="interaction">
    <interactant intactId="EBI-348517">
        <id>O95870</id>
    </interactant>
    <interactant intactId="EBI-2606700">
        <id>P18859</id>
        <label>ATP5PF</label>
    </interactant>
    <organismsDiffer>false</organismsDiffer>
    <experiments>3</experiments>
</comment>
<comment type="interaction">
    <interactant intactId="EBI-348517">
        <id>O95870</id>
    </interactant>
    <interactant intactId="EBI-2874789">
        <id>O95415</id>
        <label>BRI3</label>
    </interactant>
    <organismsDiffer>false</organismsDiffer>
    <experiments>3</experiments>
</comment>
<comment type="interaction">
    <interactant intactId="EBI-348517">
        <id>O95870</id>
    </interactant>
    <interactant intactId="EBI-19051169">
        <id>Q8N350-4</id>
        <label>CBARP</label>
    </interactant>
    <organismsDiffer>false</organismsDiffer>
    <experiments>3</experiments>
</comment>
<comment type="interaction">
    <interactant intactId="EBI-348517">
        <id>O95870</id>
    </interactant>
    <interactant intactId="EBI-7062247">
        <id>Q9UHD4</id>
        <label>CIDEB</label>
    </interactant>
    <organismsDiffer>false</organismsDiffer>
    <experiments>3</experiments>
</comment>
<comment type="interaction">
    <interactant intactId="EBI-348517">
        <id>O95870</id>
    </interactant>
    <interactant intactId="EBI-17183330">
        <id>P05177</id>
        <label>CYP1A2</label>
    </interactant>
    <organismsDiffer>false</organismsDiffer>
    <experiments>3</experiments>
</comment>
<comment type="interaction">
    <interactant intactId="EBI-348517">
        <id>O95870</id>
    </interactant>
    <interactant intactId="EBI-740376">
        <id>Q86UW9</id>
        <label>DTX2</label>
    </interactant>
    <organismsDiffer>false</organismsDiffer>
    <experiments>7</experiments>
</comment>
<comment type="interaction">
    <interactant intactId="EBI-348517">
        <id>O95870</id>
    </interactant>
    <interactant intactId="EBI-3915253">
        <id>Q15125</id>
        <label>EBP</label>
    </interactant>
    <organismsDiffer>false</organismsDiffer>
    <experiments>3</experiments>
</comment>
<comment type="interaction">
    <interactant intactId="EBI-348517">
        <id>O95870</id>
    </interactant>
    <interactant intactId="EBI-781551">
        <id>Q9Y282</id>
        <label>ERGIC3</label>
    </interactant>
    <organismsDiffer>false</organismsDiffer>
    <experiments>3</experiments>
</comment>
<comment type="interaction">
    <interactant intactId="EBI-348517">
        <id>O95870</id>
    </interactant>
    <interactant intactId="EBI-948245">
        <id>P14324</id>
        <label>FDPS</label>
    </interactant>
    <organismsDiffer>false</organismsDiffer>
    <experiments>3</experiments>
</comment>
<comment type="interaction">
    <interactant intactId="EBI-348517">
        <id>O95870</id>
    </interactant>
    <interactant intactId="EBI-3918971">
        <id>Q9Y680</id>
        <label>FKBP7</label>
    </interactant>
    <organismsDiffer>false</organismsDiffer>
    <experiments>3</experiments>
</comment>
<comment type="interaction">
    <interactant intactId="EBI-348517">
        <id>O95870</id>
    </interactant>
    <interactant intactId="EBI-11110431">
        <id>Q8TB36</id>
        <label>GDAP1</label>
    </interactant>
    <organismsDiffer>false</organismsDiffer>
    <experiments>3</experiments>
</comment>
<comment type="interaction">
    <interactant intactId="EBI-348517">
        <id>O95870</id>
    </interactant>
    <interactant intactId="EBI-750433">
        <id>P36382</id>
        <label>GJA5</label>
    </interactant>
    <organismsDiffer>false</organismsDiffer>
    <experiments>3</experiments>
</comment>
<comment type="interaction">
    <interactant intactId="EBI-348517">
        <id>O95870</id>
    </interactant>
    <interactant intactId="EBI-17231387">
        <id>Q6ZVE7</id>
        <label>GOLT1A</label>
    </interactant>
    <organismsDiffer>false</organismsDiffer>
    <experiments>3</experiments>
</comment>
<comment type="interaction">
    <interactant intactId="EBI-348517">
        <id>O95870</id>
    </interactant>
    <interactant intactId="EBI-3917143">
        <id>Q5T7V8</id>
        <label>GORAB</label>
    </interactant>
    <organismsDiffer>false</organismsDiffer>
    <experiments>3</experiments>
</comment>
<comment type="interaction">
    <interactant intactId="EBI-348517">
        <id>O95870</id>
    </interactant>
    <interactant intactId="EBI-13345167">
        <id>Q8TDT2</id>
        <label>GPR152</label>
    </interactant>
    <organismsDiffer>false</organismsDiffer>
    <experiments>3</experiments>
</comment>
<comment type="interaction">
    <interactant intactId="EBI-348517">
        <id>O95870</id>
    </interactant>
    <interactant intactId="EBI-7797098">
        <id>P04921</id>
        <label>GYPC</label>
    </interactant>
    <organismsDiffer>false</organismsDiffer>
    <experiments>3</experiments>
</comment>
<comment type="interaction">
    <interactant intactId="EBI-348517">
        <id>O95870</id>
    </interactant>
    <interactant intactId="EBI-18053395">
        <id>Q7Z5P4</id>
        <label>HSD17B13</label>
    </interactant>
    <organismsDiffer>false</organismsDiffer>
    <experiments>3</experiments>
</comment>
<comment type="interaction">
    <interactant intactId="EBI-348517">
        <id>O95870</id>
    </interactant>
    <interactant intactId="EBI-7932862">
        <id>Q01628</id>
        <label>IFITM3</label>
    </interactant>
    <organismsDiffer>false</organismsDiffer>
    <experiments>3</experiments>
</comment>
<comment type="interaction">
    <interactant intactId="EBI-348517">
        <id>O95870</id>
    </interactant>
    <interactant intactId="EBI-2568251">
        <id>P11215</id>
        <label>ITGAM</label>
    </interactant>
    <organismsDiffer>false</organismsDiffer>
    <experiments>3</experiments>
</comment>
<comment type="interaction">
    <interactant intactId="EBI-348517">
        <id>O95870</id>
    </interactant>
    <interactant intactId="EBI-524105">
        <id>P01374</id>
        <label>LTA</label>
    </interactant>
    <organismsDiffer>false</organismsDiffer>
    <experiments>3</experiments>
</comment>
<comment type="interaction">
    <interactant intactId="EBI-348517">
        <id>O95870</id>
    </interactant>
    <interactant intactId="EBI-17183069">
        <id>Q96FX8</id>
        <label>PERP</label>
    </interactant>
    <organismsDiffer>false</organismsDiffer>
    <experiments>3</experiments>
</comment>
<comment type="interaction">
    <interactant intactId="EBI-348517">
        <id>O95870</id>
    </interactant>
    <interactant intactId="EBI-12257782">
        <id>Q99640-2</id>
        <label>PKMYT1</label>
    </interactant>
    <organismsDiffer>false</organismsDiffer>
    <experiments>3</experiments>
</comment>
<comment type="interaction">
    <interactant intactId="EBI-348517">
        <id>O95870</id>
    </interactant>
    <interactant intactId="EBI-348526">
        <id>Q07864</id>
        <label>POLE</label>
    </interactant>
    <organismsDiffer>false</organismsDiffer>
    <experiments>3</experiments>
</comment>
<comment type="interaction">
    <interactant intactId="EBI-348517">
        <id>O95870</id>
    </interactant>
    <interactant intactId="EBI-2506064">
        <id>O60831</id>
        <label>PRAF2</label>
    </interactant>
    <organismsDiffer>false</organismsDiffer>
    <experiments>3</experiments>
</comment>
<comment type="interaction">
    <interactant intactId="EBI-348517">
        <id>O95870</id>
    </interactant>
    <interactant intactId="EBI-10192441">
        <id>Q86VR2</id>
        <label>RETREG3</label>
    </interactant>
    <organismsDiffer>false</organismsDiffer>
    <experiments>7</experiments>
</comment>
<comment type="interaction">
    <interactant intactId="EBI-348517">
        <id>O95870</id>
    </interactant>
    <interactant intactId="EBI-17589229">
        <id>Q6NTF9-3</id>
        <label>RHBDD2</label>
    </interactant>
    <organismsDiffer>false</organismsDiffer>
    <experiments>3</experiments>
</comment>
<comment type="interaction">
    <interactant intactId="EBI-348517">
        <id>O95870</id>
    </interactant>
    <interactant intactId="EBI-12104986">
        <id>O75783</id>
        <label>RHBDL1</label>
    </interactant>
    <organismsDiffer>false</organismsDiffer>
    <experiments>3</experiments>
</comment>
<comment type="interaction">
    <interactant intactId="EBI-348517">
        <id>O95870</id>
    </interactant>
    <interactant intactId="EBI-348482">
        <id>Q99942</id>
        <label>RNF5</label>
    </interactant>
    <organismsDiffer>false</organismsDiffer>
    <experiments>9</experiments>
</comment>
<comment type="interaction">
    <interactant intactId="EBI-348517">
        <id>O95870</id>
    </interactant>
    <interactant intactId="EBI-1058865">
        <id>O75396</id>
        <label>SEC22B</label>
    </interactant>
    <organismsDiffer>false</organismsDiffer>
    <experiments>3</experiments>
</comment>
<comment type="interaction">
    <interactant intactId="EBI-348517">
        <id>O95870</id>
    </interactant>
    <interactant intactId="EBI-2115181">
        <id>O75920</id>
        <label>SERF1B</label>
    </interactant>
    <organismsDiffer>false</organismsDiffer>
    <experiments>3</experiments>
</comment>
<comment type="interaction">
    <interactant intactId="EBI-348517">
        <id>O95870</id>
    </interactant>
    <interactant intactId="EBI-3923031">
        <id>Q14973</id>
        <label>SLC10A1</label>
    </interactant>
    <organismsDiffer>false</organismsDiffer>
    <experiments>3</experiments>
</comment>
<comment type="interaction">
    <interactant intactId="EBI-348517">
        <id>O95870</id>
    </interactant>
    <interactant intactId="EBI-8644112">
        <id>Q9BRI3</id>
        <label>SLC30A2</label>
    </interactant>
    <organismsDiffer>false</organismsDiffer>
    <experiments>3</experiments>
</comment>
<comment type="interaction">
    <interactant intactId="EBI-348517">
        <id>O95870</id>
    </interactant>
    <interactant intactId="EBI-13292283">
        <id>Q9UHI5</id>
        <label>SLC7A8</label>
    </interactant>
    <organismsDiffer>false</organismsDiffer>
    <experiments>3</experiments>
</comment>
<comment type="interaction">
    <interactant intactId="EBI-348517">
        <id>O95870</id>
    </interactant>
    <interactant intactId="EBI-10819434">
        <id>Q9NPE6</id>
        <label>SPAG4</label>
    </interactant>
    <organismsDiffer>false</organismsDiffer>
    <experiments>3</experiments>
</comment>
<comment type="interaction">
    <interactant intactId="EBI-348517">
        <id>O95870</id>
    </interactant>
    <interactant intactId="EBI-20117546">
        <id>Q9H169-2</id>
        <label>STMN4</label>
    </interactant>
    <organismsDiffer>false</organismsDiffer>
    <experiments>3</experiments>
</comment>
<comment type="interaction">
    <interactant intactId="EBI-348517">
        <id>O95870</id>
    </interactant>
    <interactant intactId="EBI-9071709">
        <id>P61266</id>
        <label>STX1B</label>
    </interactant>
    <organismsDiffer>false</organismsDiffer>
    <experiments>3</experiments>
</comment>
<comment type="interaction">
    <interactant intactId="EBI-348517">
        <id>O95870</id>
    </interactant>
    <interactant intactId="EBI-6448756">
        <id>Q96DZ7</id>
        <label>TM4SF19</label>
    </interactant>
    <organismsDiffer>false</organismsDiffer>
    <experiments>3</experiments>
</comment>
<comment type="interaction">
    <interactant intactId="EBI-348517">
        <id>O95870</id>
    </interactant>
    <interactant intactId="EBI-7238458">
        <id>Q8IV31</id>
        <label>TMEM139</label>
    </interactant>
    <organismsDiffer>false</organismsDiffer>
    <experiments>3</experiments>
</comment>
<comment type="interaction">
    <interactant intactId="EBI-348517">
        <id>O95870</id>
    </interactant>
    <interactant intactId="EBI-13342951">
        <id>Q96AN5</id>
        <label>TMEM143</label>
    </interactant>
    <organismsDiffer>false</organismsDiffer>
    <experiments>3</experiments>
</comment>
<comment type="interaction">
    <interactant intactId="EBI-348517">
        <id>O95870</id>
    </interactant>
    <interactant intactId="EBI-348587">
        <id>Q9BVK8</id>
        <label>TMEM147</label>
    </interactant>
    <organismsDiffer>false</organismsDiffer>
    <experiments>4</experiments>
</comment>
<comment type="interaction">
    <interactant intactId="EBI-348517">
        <id>O95870</id>
    </interactant>
    <interactant intactId="EBI-8638294">
        <id>Q9NUH8</id>
        <label>TMEM14B</label>
    </interactant>
    <organismsDiffer>false</organismsDiffer>
    <experiments>3</experiments>
</comment>
<comment type="interaction">
    <interactant intactId="EBI-348517">
        <id>O95870</id>
    </interactant>
    <interactant intactId="EBI-10982110">
        <id>Q96Q45-2</id>
        <label>TMEM237</label>
    </interactant>
    <organismsDiffer>false</organismsDiffer>
    <experiments>5</experiments>
</comment>
<comment type="interaction">
    <interactant intactId="EBI-348517">
        <id>O95870</id>
    </interactant>
    <interactant intactId="EBI-6656213">
        <id>Q6PI78</id>
        <label>TMEM65</label>
    </interactant>
    <organismsDiffer>false</organismsDiffer>
    <experiments>3</experiments>
</comment>
<comment type="interaction">
    <interactant intactId="EBI-348517">
        <id>O95870</id>
    </interactant>
    <interactant intactId="EBI-3914288">
        <id>O60636</id>
        <label>TSPAN2</label>
    </interactant>
    <organismsDiffer>false</organismsDiffer>
    <experiments>3</experiments>
</comment>
<comment type="interaction">
    <interactant intactId="EBI-348517">
        <id>O95870</id>
    </interactant>
    <interactant intactId="EBI-13356252">
        <id>Q86WB7-2</id>
        <label>UNC93A</label>
    </interactant>
    <organismsDiffer>false</organismsDiffer>
    <experiments>3</experiments>
</comment>
<comment type="interaction">
    <interactant intactId="EBI-348517">
        <id>O95870</id>
    </interactant>
    <interactant intactId="EBI-10191195">
        <id>O95183</id>
        <label>VAMP5</label>
    </interactant>
    <organismsDiffer>false</organismsDiffer>
    <experiments>3</experiments>
</comment>
<comment type="interaction">
    <interactant intactId="EBI-348517">
        <id>O95870</id>
    </interactant>
    <interactant intactId="EBI-1055364">
        <id>Q3ZAQ7</id>
        <label>VMA21</label>
    </interactant>
    <organismsDiffer>false</organismsDiffer>
    <experiments>3</experiments>
</comment>
<comment type="interaction">
    <interactant intactId="EBI-348517">
        <id>O95870</id>
    </interactant>
    <interactant intactId="EBI-10316321">
        <id>Q9NX94</id>
        <label>WBP1L</label>
    </interactant>
    <organismsDiffer>false</organismsDiffer>
    <experiments>3</experiments>
</comment>
<comment type="interaction">
    <interactant intactId="EBI-348517">
        <id>O95870</id>
    </interactant>
    <interactant intactId="EBI-25475897">
        <id>P0DTC6</id>
        <label>6</label>
    </interactant>
    <organismsDiffer>true</organismsDiffer>
    <experiments>3</experiments>
</comment>
<comment type="subcellular location">
    <subcellularLocation>
        <location evidence="2">Membrane</location>
        <topology evidence="3">Multi-pass membrane protein</topology>
    </subcellularLocation>
</comment>
<comment type="alternative products">
    <event type="alternative splicing"/>
    <isoform>
        <id>O95870-1</id>
        <name>1</name>
        <sequence type="displayed"/>
    </isoform>
    <isoform>
        <id>O95870-2</id>
        <name>2</name>
        <sequence type="described" ref="VSP_043825"/>
    </isoform>
</comment>
<comment type="disease" evidence="5 6 7">
    <disease id="DI-06330">
        <name>Spastic paraplegia 86, autosomal recessive</name>
        <acronym>SPG86</acronym>
        <description>A form of spastic paraplegia, a neurodegenerative disorder characterized by a slow, gradual, progressive weakness and spasticity of the lower limbs. Rate of progression and the severity of symptoms are quite variable. Initial symptoms may include difficulty with balance, weakness and stiffness in the legs, muscle spasms, and dragging the toes when walking. In some forms of the disorder, bladder symptoms (such as incontinence) may appear, or the weakness and stiffness may spread to other parts of the body. SPG86 is an autosomal recessive form associated with impaired intellectual development, poor or absent speech, and behavioral abnormalities. Brain imaging shows thin corpus callosum and white matter abnormalities. Rare patients may have seizures.</description>
        <dbReference type="MIM" id="619735"/>
    </disease>
    <text>The disease is caused by variants affecting the gene represented in this entry.</text>
</comment>
<comment type="similarity">
    <text evidence="10">Belongs to the AB hydrolase superfamily. ABHD16 family.</text>
</comment>
<dbReference type="EC" id="3.1.-.-" evidence="2"/>
<dbReference type="EC" id="3.1.1.23" evidence="4"/>
<dbReference type="EMBL" id="AF193047">
    <property type="protein sequence ID" value="AAG22475.1"/>
    <property type="molecule type" value="mRNA"/>
</dbReference>
<dbReference type="EMBL" id="AK001207">
    <property type="protein sequence ID" value="BAA91553.1"/>
    <property type="molecule type" value="mRNA"/>
</dbReference>
<dbReference type="EMBL" id="AK023194">
    <property type="protein sequence ID" value="BAB14455.1"/>
    <property type="molecule type" value="mRNA"/>
</dbReference>
<dbReference type="EMBL" id="AK297712">
    <property type="protein sequence ID" value="BAH12652.1"/>
    <property type="molecule type" value="mRNA"/>
</dbReference>
<dbReference type="EMBL" id="AF129756">
    <property type="protein sequence ID" value="AAD18079.1"/>
    <property type="molecule type" value="Genomic_DNA"/>
</dbReference>
<dbReference type="EMBL" id="BA000025">
    <property type="protein sequence ID" value="BAB63383.1"/>
    <property type="molecule type" value="Genomic_DNA"/>
</dbReference>
<dbReference type="EMBL" id="AL662899">
    <property type="status" value="NOT_ANNOTATED_CDS"/>
    <property type="molecule type" value="Genomic_DNA"/>
</dbReference>
<dbReference type="EMBL" id="AL670886">
    <property type="status" value="NOT_ANNOTATED_CDS"/>
    <property type="molecule type" value="Genomic_DNA"/>
</dbReference>
<dbReference type="EMBL" id="AL805934">
    <property type="status" value="NOT_ANNOTATED_CDS"/>
    <property type="molecule type" value="Genomic_DNA"/>
</dbReference>
<dbReference type="EMBL" id="BX248244">
    <property type="status" value="NOT_ANNOTATED_CDS"/>
    <property type="molecule type" value="Genomic_DNA"/>
</dbReference>
<dbReference type="EMBL" id="BX511262">
    <property type="status" value="NOT_ANNOTATED_CDS"/>
    <property type="molecule type" value="Genomic_DNA"/>
</dbReference>
<dbReference type="EMBL" id="CR354443">
    <property type="status" value="NOT_ANNOTATED_CDS"/>
    <property type="molecule type" value="Genomic_DNA"/>
</dbReference>
<dbReference type="EMBL" id="CR753842">
    <property type="status" value="NOT_ANNOTATED_CDS"/>
    <property type="molecule type" value="Genomic_DNA"/>
</dbReference>
<dbReference type="EMBL" id="CR759761">
    <property type="status" value="NOT_ANNOTATED_CDS"/>
    <property type="molecule type" value="Genomic_DNA"/>
</dbReference>
<dbReference type="EMBL" id="CR759787">
    <property type="status" value="NOT_ANNOTATED_CDS"/>
    <property type="molecule type" value="Genomic_DNA"/>
</dbReference>
<dbReference type="EMBL" id="BC031839">
    <property type="protein sequence ID" value="AAH31839.1"/>
    <property type="molecule type" value="mRNA"/>
</dbReference>
<dbReference type="CCDS" id="CCDS4713.1">
    <molecule id="O95870-1"/>
</dbReference>
<dbReference type="CCDS" id="CCDS54988.1">
    <molecule id="O95870-2"/>
</dbReference>
<dbReference type="RefSeq" id="NP_001170986.1">
    <molecule id="O95870-2"/>
    <property type="nucleotide sequence ID" value="NM_001177515.2"/>
</dbReference>
<dbReference type="RefSeq" id="NP_066983.1">
    <molecule id="O95870-1"/>
    <property type="nucleotide sequence ID" value="NM_021160.3"/>
</dbReference>
<dbReference type="SMR" id="O95870"/>
<dbReference type="BioGRID" id="113650">
    <property type="interactions" value="90"/>
</dbReference>
<dbReference type="FunCoup" id="O95870">
    <property type="interactions" value="1419"/>
</dbReference>
<dbReference type="IntAct" id="O95870">
    <property type="interactions" value="83"/>
</dbReference>
<dbReference type="MINT" id="O95870"/>
<dbReference type="STRING" id="9606.ENSP00000379282"/>
<dbReference type="BindingDB" id="O95870"/>
<dbReference type="ChEMBL" id="CHEMBL6168"/>
<dbReference type="DrugCentral" id="O95870"/>
<dbReference type="SwissLipids" id="SLP:000001120"/>
<dbReference type="ESTHER" id="human-ABHD16A">
    <property type="family name" value="ABHD16"/>
</dbReference>
<dbReference type="MEROPS" id="S09.065"/>
<dbReference type="GlyGen" id="O95870">
    <property type="glycosylation" value="1 site, 1 O-linked glycan (1 site)"/>
</dbReference>
<dbReference type="iPTMnet" id="O95870"/>
<dbReference type="PhosphoSitePlus" id="O95870"/>
<dbReference type="SwissPalm" id="O95870"/>
<dbReference type="BioMuta" id="ABHD16A"/>
<dbReference type="jPOST" id="O95870"/>
<dbReference type="MassIVE" id="O95870"/>
<dbReference type="PaxDb" id="9606-ENSP00000379282"/>
<dbReference type="PeptideAtlas" id="O95870"/>
<dbReference type="ProteomicsDB" id="51110">
    <molecule id="O95870-1"/>
</dbReference>
<dbReference type="ProteomicsDB" id="51111">
    <molecule id="O95870-2"/>
</dbReference>
<dbReference type="Pumba" id="O95870"/>
<dbReference type="Antibodypedia" id="27504">
    <property type="antibodies" value="92 antibodies from 18 providers"/>
</dbReference>
<dbReference type="DNASU" id="7920"/>
<dbReference type="Ensembl" id="ENST00000395952.8">
    <molecule id="O95870-1"/>
    <property type="protein sequence ID" value="ENSP00000379282.3"/>
    <property type="gene ID" value="ENSG00000204427.12"/>
</dbReference>
<dbReference type="Ensembl" id="ENST00000440843.2">
    <molecule id="O95870-2"/>
    <property type="protein sequence ID" value="ENSP00000410347.2"/>
    <property type="gene ID" value="ENSG00000204427.12"/>
</dbReference>
<dbReference type="Ensembl" id="ENST00000446529.6">
    <molecule id="O95870-1"/>
    <property type="protein sequence ID" value="ENSP00000395665.2"/>
    <property type="gene ID" value="ENSG00000206403.11"/>
</dbReference>
<dbReference type="Ensembl" id="ENST00000548592.1">
    <molecule id="O95870-2"/>
    <property type="protein sequence ID" value="ENSP00000448431.1"/>
    <property type="gene ID" value="ENSG00000206403.11"/>
</dbReference>
<dbReference type="Ensembl" id="ENST00000549722.1">
    <molecule id="O95870-2"/>
    <property type="protein sequence ID" value="ENSP00000447549.1"/>
    <property type="gene ID" value="ENSG00000230475.9"/>
</dbReference>
<dbReference type="Ensembl" id="ENST00000549853.1">
    <molecule id="O95870-2"/>
    <property type="protein sequence ID" value="ENSP00000447846.1"/>
    <property type="gene ID" value="ENSG00000236063.9"/>
</dbReference>
<dbReference type="Ensembl" id="ENST00000550556.1">
    <molecule id="O95870-2"/>
    <property type="protein sequence ID" value="ENSP00000447498.1"/>
    <property type="gene ID" value="ENSG00000235676.9"/>
</dbReference>
<dbReference type="Ensembl" id="ENST00000551038.1">
    <molecule id="O95870-2"/>
    <property type="protein sequence ID" value="ENSP00000449579.1"/>
    <property type="gene ID" value="ENSG00000231488.9"/>
</dbReference>
<dbReference type="Ensembl" id="ENST00000552042.1">
    <molecule id="O95870-2"/>
    <property type="protein sequence ID" value="ENSP00000448451.1"/>
    <property type="gene ID" value="ENSG00000224552.9"/>
</dbReference>
<dbReference type="GeneID" id="7920"/>
<dbReference type="KEGG" id="hsa:7920"/>
<dbReference type="MANE-Select" id="ENST00000395952.8">
    <property type="protein sequence ID" value="ENSP00000379282.3"/>
    <property type="RefSeq nucleotide sequence ID" value="NM_021160.3"/>
    <property type="RefSeq protein sequence ID" value="NP_066983.1"/>
</dbReference>
<dbReference type="UCSC" id="uc003nvy.3">
    <molecule id="O95870-1"/>
    <property type="organism name" value="human"/>
</dbReference>
<dbReference type="AGR" id="HGNC:13921"/>
<dbReference type="CTD" id="7920"/>
<dbReference type="DisGeNET" id="7920"/>
<dbReference type="GeneCards" id="ABHD16A"/>
<dbReference type="HGNC" id="HGNC:13921">
    <property type="gene designation" value="ABHD16A"/>
</dbReference>
<dbReference type="HPA" id="ENSG00000204427">
    <property type="expression patterns" value="Low tissue specificity"/>
</dbReference>
<dbReference type="MalaCards" id="ABHD16A"/>
<dbReference type="MIM" id="142620">
    <property type="type" value="gene"/>
</dbReference>
<dbReference type="MIM" id="619735">
    <property type="type" value="phenotype"/>
</dbReference>
<dbReference type="neXtProt" id="NX_O95870"/>
<dbReference type="OpenTargets" id="ENSG00000204427"/>
<dbReference type="Orphanet" id="631085">
    <property type="disease" value="Autosomal recessive spastic paraplegia type 86"/>
</dbReference>
<dbReference type="PharmGKB" id="PA25266"/>
<dbReference type="VEuPathDB" id="HostDB:ENSG00000204427"/>
<dbReference type="eggNOG" id="KOG1553">
    <property type="taxonomic scope" value="Eukaryota"/>
</dbReference>
<dbReference type="GeneTree" id="ENSGT00940000160908"/>
<dbReference type="HOGENOM" id="CLU_040705_2_0_1"/>
<dbReference type="InParanoid" id="O95870"/>
<dbReference type="OMA" id="THCTQLP"/>
<dbReference type="OrthoDB" id="6412627at2759"/>
<dbReference type="PAN-GO" id="O95870">
    <property type="GO annotations" value="6 GO annotations based on evolutionary models"/>
</dbReference>
<dbReference type="PhylomeDB" id="O95870"/>
<dbReference type="TreeFam" id="TF314267"/>
<dbReference type="PathwayCommons" id="O95870"/>
<dbReference type="SignaLink" id="O95870"/>
<dbReference type="BioGRID-ORCS" id="7920">
    <property type="hits" value="23 hits in 1146 CRISPR screens"/>
</dbReference>
<dbReference type="CD-CODE" id="FB4E32DD">
    <property type="entry name" value="Presynaptic clusters and postsynaptic densities"/>
</dbReference>
<dbReference type="ChiTaRS" id="ABHD16A">
    <property type="organism name" value="human"/>
</dbReference>
<dbReference type="GeneWiki" id="BAT5"/>
<dbReference type="GenomeRNAi" id="7920"/>
<dbReference type="Pharos" id="O95870">
    <property type="development level" value="Tchem"/>
</dbReference>
<dbReference type="PRO" id="PR:O95870"/>
<dbReference type="Proteomes" id="UP000005640">
    <property type="component" value="Chromosome 6"/>
</dbReference>
<dbReference type="RNAct" id="O95870">
    <property type="molecule type" value="protein"/>
</dbReference>
<dbReference type="Bgee" id="ENSG00000204427">
    <property type="expression patterns" value="Expressed in pituitary gland and 98 other cell types or tissues"/>
</dbReference>
<dbReference type="ExpressionAtlas" id="O95870">
    <property type="expression patterns" value="baseline and differential"/>
</dbReference>
<dbReference type="GO" id="GO:0016020">
    <property type="term" value="C:membrane"/>
    <property type="evidence" value="ECO:0007669"/>
    <property type="project" value="UniProtKB-SubCell"/>
</dbReference>
<dbReference type="GO" id="GO:0047372">
    <property type="term" value="F:monoacylglycerol lipase activity"/>
    <property type="evidence" value="ECO:0000314"/>
    <property type="project" value="UniProtKB"/>
</dbReference>
<dbReference type="GO" id="GO:0004620">
    <property type="term" value="F:phospholipase activity"/>
    <property type="evidence" value="ECO:0000250"/>
    <property type="project" value="UniProtKB"/>
</dbReference>
<dbReference type="GO" id="GO:0052651">
    <property type="term" value="P:monoacylglycerol catabolic process"/>
    <property type="evidence" value="ECO:0000314"/>
    <property type="project" value="UniProtKB"/>
</dbReference>
<dbReference type="GO" id="GO:0006660">
    <property type="term" value="P:phosphatidylserine catabolic process"/>
    <property type="evidence" value="ECO:0000250"/>
    <property type="project" value="UniProtKB"/>
</dbReference>
<dbReference type="GO" id="GO:1905344">
    <property type="term" value="P:prostaglandin catabolic process"/>
    <property type="evidence" value="ECO:0000314"/>
    <property type="project" value="BHF-UCL"/>
</dbReference>
<dbReference type="FunFam" id="3.40.50.1820:FF:000074">
    <property type="entry name" value="Abhydrolase domain containing 16A"/>
    <property type="match status" value="1"/>
</dbReference>
<dbReference type="Gene3D" id="3.40.50.1820">
    <property type="entry name" value="alpha/beta hydrolase"/>
    <property type="match status" value="1"/>
</dbReference>
<dbReference type="InterPro" id="IPR000073">
    <property type="entry name" value="AB_hydrolase_1"/>
</dbReference>
<dbReference type="InterPro" id="IPR029058">
    <property type="entry name" value="AB_hydrolase_fold"/>
</dbReference>
<dbReference type="InterPro" id="IPR054518">
    <property type="entry name" value="ABHD16_N"/>
</dbReference>
<dbReference type="PANTHER" id="PTHR12277">
    <property type="entry name" value="ALPHA/BETA HYDROLASE DOMAIN-CONTAINING PROTEIN"/>
    <property type="match status" value="1"/>
</dbReference>
<dbReference type="PANTHER" id="PTHR12277:SF54">
    <property type="entry name" value="PHOSPHATIDYLSERINE LIPASE ABHD16A"/>
    <property type="match status" value="1"/>
</dbReference>
<dbReference type="Pfam" id="PF22990">
    <property type="entry name" value="ABHD16_N"/>
    <property type="match status" value="1"/>
</dbReference>
<dbReference type="Pfam" id="PF00561">
    <property type="entry name" value="Abhydrolase_1"/>
    <property type="match status" value="1"/>
</dbReference>
<dbReference type="SUPFAM" id="SSF53474">
    <property type="entry name" value="alpha/beta-Hydrolases"/>
    <property type="match status" value="1"/>
</dbReference>
<proteinExistence type="evidence at protein level"/>
<feature type="chain" id="PRO_0000064833" description="Phosphatidylserine lipase ABHD16A">
    <location>
        <begin position="1"/>
        <end position="558"/>
    </location>
</feature>
<feature type="transmembrane region" description="Helical" evidence="3">
    <location>
        <begin position="60"/>
        <end position="80"/>
    </location>
</feature>
<feature type="transmembrane region" description="Helical" evidence="3">
    <location>
        <begin position="93"/>
        <end position="113"/>
    </location>
</feature>
<feature type="topological domain" description="Cytoplasmic" evidence="2">
    <location>
        <begin position="114"/>
        <end position="558"/>
    </location>
</feature>
<feature type="domain" description="AB hydrolase-1" evidence="3">
    <location>
        <begin position="281"/>
        <end position="407"/>
    </location>
</feature>
<feature type="active site" description="Charge relay system" evidence="1">
    <location>
        <position position="355"/>
    </location>
</feature>
<feature type="active site" description="Charge relay system" evidence="1">
    <location>
        <position position="430"/>
    </location>
</feature>
<feature type="active site" description="Charge relay system" evidence="1">
    <location>
        <position position="507"/>
    </location>
</feature>
<feature type="splice variant" id="VSP_043825" description="In isoform 2." evidence="8">
    <original>MAKLLSCVLGPRLYKIYRERDSERAPASVPETPTAVTAPHSSSWDTYYQPRALEKHADSILALASVFWSISYYSSPFAFFYLYRK</original>
    <variation>MPPPALFLSSLYPRLEFQNDFYRSCIRRSSPQPPPNLAWRPESLYSGELAGG</variation>
    <location>
        <begin position="1"/>
        <end position="85"/>
    </location>
</feature>
<feature type="sequence variant" id="VAR_086886" description="In SPG86; no protein detected in homozygous patient cells; increased levels of phosphatidylserine and decreased levels of lysophosphatidylserine in homozygous patient cells, indicating loss of function in phosphatidylserine catabolism." evidence="5">
    <location>
        <begin position="114"/>
        <end position="558"/>
    </location>
</feature>
<feature type="sequence variant" id="VAR_086887" description="In SPG86." evidence="6">
    <original>R</original>
    <variation>H</variation>
    <location>
        <position position="118"/>
    </location>
</feature>
<feature type="sequence variant" id="VAR_086888" description="In SPG86; uncertain significance." evidence="6">
    <original>N</original>
    <variation>I</variation>
    <location>
        <position position="121"/>
    </location>
</feature>
<feature type="sequence variant" id="VAR_086889" description="In SPG86; uncertain significance." evidence="6">
    <original>R</original>
    <variation>Q</variation>
    <location>
        <position position="252"/>
    </location>
</feature>
<feature type="sequence variant" id="VAR_086890" description="In SPG86." evidence="7">
    <location>
        <begin position="279"/>
        <end position="558"/>
    </location>
</feature>
<feature type="sequence variant" id="VAR_086891" description="In SPG86; uncertain significance." evidence="6">
    <original>L</original>
    <variation>R</variation>
    <location>
        <position position="409"/>
    </location>
</feature>
<feature type="sequence variant" id="VAR_086892" description="In SPG86." evidence="6">
    <location>
        <begin position="445"/>
        <end position="558"/>
    </location>
</feature>
<feature type="sequence variant" id="VAR_086893" description="In SPG86; no protein detected in homozygous patient cells; increased levels of phosphatidylserine and decreased levels of lysophosphatidylserine in homozygous patient cells, indicating loss of function in phosphatidylserine catabolism." evidence="5">
    <original>R</original>
    <variation>Q</variation>
    <location>
        <position position="457"/>
    </location>
</feature>
<feature type="sequence conflict" description="In Ref. 1; AAG22475." evidence="10" ref="1">
    <original>A</original>
    <variation>V</variation>
    <location>
        <position position="27"/>
    </location>
</feature>
<keyword id="KW-0025">Alternative splicing</keyword>
<keyword id="KW-0903">Direct protein sequencing</keyword>
<keyword id="KW-0225">Disease variant</keyword>
<keyword id="KW-0890">Hereditary spastic paraplegia</keyword>
<keyword id="KW-0378">Hydrolase</keyword>
<keyword id="KW-0443">Lipid metabolism</keyword>
<keyword id="KW-0472">Membrane</keyword>
<keyword id="KW-0523">Neurodegeneration</keyword>
<keyword id="KW-1267">Proteomics identification</keyword>
<keyword id="KW-1185">Reference proteome</keyword>
<keyword id="KW-0812">Transmembrane</keyword>
<keyword id="KW-1133">Transmembrane helix</keyword>
<evidence type="ECO:0000250" key="1">
    <source>
        <dbReference type="UniProtKB" id="Q8N2K0"/>
    </source>
</evidence>
<evidence type="ECO:0000250" key="2">
    <source>
        <dbReference type="UniProtKB" id="Q9Z1Q2"/>
    </source>
</evidence>
<evidence type="ECO:0000255" key="3"/>
<evidence type="ECO:0000269" key="4">
    <source>
    </source>
</evidence>
<evidence type="ECO:0000269" key="5">
    <source>
    </source>
</evidence>
<evidence type="ECO:0000269" key="6">
    <source>
    </source>
</evidence>
<evidence type="ECO:0000269" key="7">
    <source>
    </source>
</evidence>
<evidence type="ECO:0000303" key="8">
    <source>
    </source>
</evidence>
<evidence type="ECO:0000303" key="9">
    <source>
    </source>
</evidence>
<evidence type="ECO:0000305" key="10"/>
<evidence type="ECO:0000312" key="11">
    <source>
        <dbReference type="HGNC" id="HGNC:13921"/>
    </source>
</evidence>
<name>ABHGA_HUMAN</name>
<sequence length="558" mass="63243">MAKLLSCVLGPRLYKIYRERDSERAPASVPETPTAVTAPHSSSWDTYYQPRALEKHADSILALASVFWSISYYSSPFAFFYLYRKGYLSLSKVVPFSHYAGTLLLLLAGVACLRGIGRWTNPQYRQFITILEATHRNQSSENKRQLANYNFDFRSWPVDFHWEEPSSRKESRGGPSRRGVALLRPEPLHRGTADTLLNRVKKLPCQITSYLVAHTLGRRMLYPGSVYLLQKALMPVLLQGQARLVEECNGRRAKLLACDGNEIDTMFVDRRGTAEPQGQKLVICCEGNAGFYEVGCVSTPLEAGYSVLGWNHPGFAGSTGVPFPQNEANAMDVVVQFAIHRLGFQPQDIIIYAWSIGGFTATWAAMSYPDVSAMILDASFDDLVPLALKVMPDSWRGLVTRTVRQHLNLNNAEQLCRYQGPVLLIRRTKDEIITTTVPEDIMSNRGNDLLLKLLQHRYPRVMAEEGLRVVRQWLEASSQLEEASIYSRWEVEEDWCLSVLRSYQAEHGPDFPWSVGEDMSADGRRQLALFLARKHLHNFEATHCTPLPAQNFQMPWHL</sequence>
<organism>
    <name type="scientific">Homo sapiens</name>
    <name type="common">Human</name>
    <dbReference type="NCBI Taxonomy" id="9606"/>
    <lineage>
        <taxon>Eukaryota</taxon>
        <taxon>Metazoa</taxon>
        <taxon>Chordata</taxon>
        <taxon>Craniata</taxon>
        <taxon>Vertebrata</taxon>
        <taxon>Euteleostomi</taxon>
        <taxon>Mammalia</taxon>
        <taxon>Eutheria</taxon>
        <taxon>Euarchontoglires</taxon>
        <taxon>Primates</taxon>
        <taxon>Haplorrhini</taxon>
        <taxon>Catarrhini</taxon>
        <taxon>Hominidae</taxon>
        <taxon>Homo</taxon>
    </lineage>
</organism>